<sequence>DCPSDWSSHEEHCYKVFRLFKTWEEAEKFCTQQVNGWHLASIESVEEANFLAELVPKTLIKSKYHVWIGLRDQSERQQCSSHWTDGSAVSYEKVVRFTKCFGLNKDKGYLEWVTLPCEDKNPFICKSWVPH</sequence>
<protein>
    <recommendedName>
        <fullName evidence="4">Snaclec macrovipecetin subunit alpha</fullName>
    </recommendedName>
</protein>
<dbReference type="SMR" id="C0HKZ6"/>
<dbReference type="GO" id="GO:0005576">
    <property type="term" value="C:extracellular region"/>
    <property type="evidence" value="ECO:0007669"/>
    <property type="project" value="UniProtKB-SubCell"/>
</dbReference>
<dbReference type="GO" id="GO:0090729">
    <property type="term" value="F:toxin activity"/>
    <property type="evidence" value="ECO:0007669"/>
    <property type="project" value="UniProtKB-KW"/>
</dbReference>
<dbReference type="FunFam" id="3.10.100.10:FF:000087">
    <property type="entry name" value="Snaclec rhodocetin subunit delta"/>
    <property type="match status" value="1"/>
</dbReference>
<dbReference type="Gene3D" id="3.10.100.10">
    <property type="entry name" value="Mannose-Binding Protein A, subunit A"/>
    <property type="match status" value="1"/>
</dbReference>
<dbReference type="InterPro" id="IPR001304">
    <property type="entry name" value="C-type_lectin-like"/>
</dbReference>
<dbReference type="InterPro" id="IPR016186">
    <property type="entry name" value="C-type_lectin-like/link_sf"/>
</dbReference>
<dbReference type="InterPro" id="IPR050111">
    <property type="entry name" value="C-type_lectin/snaclec_domain"/>
</dbReference>
<dbReference type="InterPro" id="IPR016187">
    <property type="entry name" value="CTDL_fold"/>
</dbReference>
<dbReference type="PANTHER" id="PTHR22803">
    <property type="entry name" value="MANNOSE, PHOSPHOLIPASE, LECTIN RECEPTOR RELATED"/>
    <property type="match status" value="1"/>
</dbReference>
<dbReference type="Pfam" id="PF00059">
    <property type="entry name" value="Lectin_C"/>
    <property type="match status" value="1"/>
</dbReference>
<dbReference type="SMART" id="SM00034">
    <property type="entry name" value="CLECT"/>
    <property type="match status" value="1"/>
</dbReference>
<dbReference type="SUPFAM" id="SSF56436">
    <property type="entry name" value="C-type lectin-like"/>
    <property type="match status" value="1"/>
</dbReference>
<dbReference type="PROSITE" id="PS50041">
    <property type="entry name" value="C_TYPE_LECTIN_2"/>
    <property type="match status" value="1"/>
</dbReference>
<keyword id="KW-0903">Direct protein sequencing</keyword>
<keyword id="KW-1015">Disulfide bond</keyword>
<keyword id="KW-1199">Hemostasis impairing toxin</keyword>
<keyword id="KW-0964">Secreted</keyword>
<keyword id="KW-0800">Toxin</keyword>
<proteinExistence type="evidence at protein level"/>
<evidence type="ECO:0000250" key="1">
    <source>
        <dbReference type="UniProtKB" id="Q8JIV9"/>
    </source>
</evidence>
<evidence type="ECO:0000255" key="2">
    <source>
        <dbReference type="PROSITE-ProRule" id="PRU00040"/>
    </source>
</evidence>
<evidence type="ECO:0000269" key="3">
    <source>
    </source>
</evidence>
<evidence type="ECO:0000303" key="4">
    <source>
    </source>
</evidence>
<evidence type="ECO:0000305" key="5"/>
<evidence type="ECO:0000305" key="6">
    <source>
    </source>
</evidence>
<comment type="function">
    <text evidence="5">Interferes with one step of hemostasis (modulation of platelet aggregation, or coagulation cascade, for example).</text>
</comment>
<comment type="subunit">
    <text evidence="3">Heterodimer of subunits alpha and beta; disulfide-linked.</text>
</comment>
<comment type="subcellular location">
    <subcellularLocation>
        <location evidence="3">Secreted</location>
    </subcellularLocation>
</comment>
<comment type="tissue specificity">
    <text evidence="6">Expressed by the venom gland.</text>
</comment>
<comment type="mass spectrometry"/>
<comment type="similarity">
    <text evidence="5">Belongs to the snaclec family.</text>
</comment>
<organism evidence="4">
    <name type="scientific">Macrovipera lebetinus</name>
    <name type="common">Levantine viper</name>
    <name type="synonym">Vipera lebetina</name>
    <dbReference type="NCBI Taxonomy" id="3148341"/>
    <lineage>
        <taxon>Eukaryota</taxon>
        <taxon>Metazoa</taxon>
        <taxon>Chordata</taxon>
        <taxon>Craniata</taxon>
        <taxon>Vertebrata</taxon>
        <taxon>Euteleostomi</taxon>
        <taxon>Lepidosauria</taxon>
        <taxon>Squamata</taxon>
        <taxon>Bifurcata</taxon>
        <taxon>Unidentata</taxon>
        <taxon>Episquamata</taxon>
        <taxon>Toxicofera</taxon>
        <taxon>Serpentes</taxon>
        <taxon>Colubroidea</taxon>
        <taxon>Viperidae</taxon>
        <taxon>Viperinae</taxon>
        <taxon>Macrovipera</taxon>
    </lineage>
</organism>
<feature type="chain" id="PRO_0000444294" description="Snaclec macrovipecetin subunit alpha" evidence="3">
    <location>
        <begin position="1"/>
        <end position="131"/>
    </location>
</feature>
<feature type="domain" description="C-type lectin" evidence="2">
    <location>
        <begin position="9"/>
        <end position="126"/>
    </location>
</feature>
<feature type="disulfide bond" evidence="1">
    <location>
        <begin position="2"/>
        <end position="13"/>
    </location>
</feature>
<feature type="disulfide bond" evidence="1">
    <location>
        <begin position="30"/>
        <end position="125"/>
    </location>
</feature>
<feature type="disulfide bond" description="Interchain (with C-77 in subunit beta)" evidence="1">
    <location>
        <position position="79"/>
    </location>
</feature>
<feature type="disulfide bond" evidence="2">
    <location>
        <begin position="100"/>
        <end position="117"/>
    </location>
</feature>
<name>SLMA_MACLB</name>
<reference evidence="5" key="1">
    <citation type="journal article" date="2018" name="Biochim. Biophys. Acta">
        <title>Macrovipecetin, a C-type lectin from Macrovipera lebetina venom, inhibits proliferation migration and invasion of SK-MEL-28 human melanoma cells and enhances their sensitivity to cisplatin.</title>
        <authorList>
            <person name="Hammouda M.B."/>
            <person name="Riahi-Chebbi I."/>
            <person name="Souid S."/>
            <person name="Othman H."/>
            <person name="Aloui Z."/>
            <person name="Srairi-Abid N."/>
            <person name="Karoui H."/>
            <person name="Gasmi A."/>
            <person name="Magnenat E.M."/>
            <person name="Wells T.N.C."/>
            <person name="Clemetson K.J."/>
            <person name="Rodriguez-Lopez J.N."/>
            <person name="Essafi-Benkhadir K."/>
        </authorList>
    </citation>
    <scope>PROTEIN SEQUENCE</scope>
    <scope>SUBUNIT</scope>
    <scope>SUBCELLULAR LOCATION</scope>
    <scope>MASS SPECTROMETRY</scope>
    <source>
        <tissue evidence="4">Venom</tissue>
    </source>
</reference>
<accession>C0HKZ6</accession>